<dbReference type="EC" id="3.6.5.4" evidence="1"/>
<dbReference type="EMBL" id="CP000742">
    <property type="protein sequence ID" value="ABR54770.1"/>
    <property type="molecule type" value="Genomic_DNA"/>
</dbReference>
<dbReference type="RefSeq" id="WP_011972671.1">
    <property type="nucleotide sequence ID" value="NC_009634.1"/>
</dbReference>
<dbReference type="SMR" id="A6UQJ8"/>
<dbReference type="STRING" id="406327.Mevan_0865"/>
<dbReference type="GeneID" id="5324894"/>
<dbReference type="KEGG" id="mvn:Mevan_0865"/>
<dbReference type="eggNOG" id="arCOG01228">
    <property type="taxonomic scope" value="Archaea"/>
</dbReference>
<dbReference type="HOGENOM" id="CLU_009301_6_0_2"/>
<dbReference type="OrthoDB" id="52849at2157"/>
<dbReference type="Proteomes" id="UP000001107">
    <property type="component" value="Chromosome"/>
</dbReference>
<dbReference type="GO" id="GO:0048500">
    <property type="term" value="C:signal recognition particle"/>
    <property type="evidence" value="ECO:0007669"/>
    <property type="project" value="UniProtKB-UniRule"/>
</dbReference>
<dbReference type="GO" id="GO:0008312">
    <property type="term" value="F:7S RNA binding"/>
    <property type="evidence" value="ECO:0007669"/>
    <property type="project" value="UniProtKB-UniRule"/>
</dbReference>
<dbReference type="GO" id="GO:0016887">
    <property type="term" value="F:ATP hydrolysis activity"/>
    <property type="evidence" value="ECO:0007669"/>
    <property type="project" value="InterPro"/>
</dbReference>
<dbReference type="GO" id="GO:0005525">
    <property type="term" value="F:GTP binding"/>
    <property type="evidence" value="ECO:0007669"/>
    <property type="project" value="UniProtKB-UniRule"/>
</dbReference>
<dbReference type="GO" id="GO:0003924">
    <property type="term" value="F:GTPase activity"/>
    <property type="evidence" value="ECO:0007669"/>
    <property type="project" value="UniProtKB-UniRule"/>
</dbReference>
<dbReference type="GO" id="GO:0006614">
    <property type="term" value="P:SRP-dependent cotranslational protein targeting to membrane"/>
    <property type="evidence" value="ECO:0007669"/>
    <property type="project" value="InterPro"/>
</dbReference>
<dbReference type="CDD" id="cd17875">
    <property type="entry name" value="SRP54_G"/>
    <property type="match status" value="1"/>
</dbReference>
<dbReference type="FunFam" id="3.40.50.300:FF:000022">
    <property type="entry name" value="Signal recognition particle 54 kDa subunit"/>
    <property type="match status" value="1"/>
</dbReference>
<dbReference type="Gene3D" id="3.40.50.300">
    <property type="entry name" value="P-loop containing nucleotide triphosphate hydrolases"/>
    <property type="match status" value="1"/>
</dbReference>
<dbReference type="Gene3D" id="1.20.120.140">
    <property type="entry name" value="Signal recognition particle SRP54, nucleotide-binding domain"/>
    <property type="match status" value="1"/>
</dbReference>
<dbReference type="Gene3D" id="1.10.260.30">
    <property type="entry name" value="Signal recognition particle, SRP54 subunit, M-domain"/>
    <property type="match status" value="1"/>
</dbReference>
<dbReference type="HAMAP" id="MF_00306">
    <property type="entry name" value="SRP54"/>
    <property type="match status" value="1"/>
</dbReference>
<dbReference type="InterPro" id="IPR003593">
    <property type="entry name" value="AAA+_ATPase"/>
</dbReference>
<dbReference type="InterPro" id="IPR027417">
    <property type="entry name" value="P-loop_NTPase"/>
</dbReference>
<dbReference type="InterPro" id="IPR036891">
    <property type="entry name" value="Signal_recog_part_SRP54_M_sf"/>
</dbReference>
<dbReference type="InterPro" id="IPR013822">
    <property type="entry name" value="Signal_recog_particl_SRP54_hlx"/>
</dbReference>
<dbReference type="InterPro" id="IPR004125">
    <property type="entry name" value="Signal_recog_particle_SRP54_M"/>
</dbReference>
<dbReference type="InterPro" id="IPR036225">
    <property type="entry name" value="SRP/SRP_N"/>
</dbReference>
<dbReference type="InterPro" id="IPR022941">
    <property type="entry name" value="SRP54"/>
</dbReference>
<dbReference type="InterPro" id="IPR000897">
    <property type="entry name" value="SRP54_GTPase_dom"/>
</dbReference>
<dbReference type="InterPro" id="IPR042101">
    <property type="entry name" value="SRP54_N_sf"/>
</dbReference>
<dbReference type="PANTHER" id="PTHR11564">
    <property type="entry name" value="SIGNAL RECOGNITION PARTICLE 54K PROTEIN SRP54"/>
    <property type="match status" value="1"/>
</dbReference>
<dbReference type="PANTHER" id="PTHR11564:SF5">
    <property type="entry name" value="SIGNAL RECOGNITION PARTICLE SUBUNIT SRP54"/>
    <property type="match status" value="1"/>
</dbReference>
<dbReference type="Pfam" id="PF00448">
    <property type="entry name" value="SRP54"/>
    <property type="match status" value="1"/>
</dbReference>
<dbReference type="Pfam" id="PF02881">
    <property type="entry name" value="SRP54_N"/>
    <property type="match status" value="1"/>
</dbReference>
<dbReference type="Pfam" id="PF02978">
    <property type="entry name" value="SRP_SPB"/>
    <property type="match status" value="1"/>
</dbReference>
<dbReference type="SMART" id="SM00382">
    <property type="entry name" value="AAA"/>
    <property type="match status" value="1"/>
</dbReference>
<dbReference type="SMART" id="SM00962">
    <property type="entry name" value="SRP54"/>
    <property type="match status" value="1"/>
</dbReference>
<dbReference type="SMART" id="SM00963">
    <property type="entry name" value="SRP54_N"/>
    <property type="match status" value="1"/>
</dbReference>
<dbReference type="SUPFAM" id="SSF47364">
    <property type="entry name" value="Domain of the SRP/SRP receptor G-proteins"/>
    <property type="match status" value="1"/>
</dbReference>
<dbReference type="SUPFAM" id="SSF52540">
    <property type="entry name" value="P-loop containing nucleoside triphosphate hydrolases"/>
    <property type="match status" value="1"/>
</dbReference>
<dbReference type="SUPFAM" id="SSF47446">
    <property type="entry name" value="Signal peptide-binding domain"/>
    <property type="match status" value="1"/>
</dbReference>
<dbReference type="PROSITE" id="PS00300">
    <property type="entry name" value="SRP54"/>
    <property type="match status" value="1"/>
</dbReference>
<gene>
    <name evidence="1" type="primary">srp54</name>
    <name type="ordered locus">Mevan_0865</name>
</gene>
<reference key="1">
    <citation type="submission" date="2007-06" db="EMBL/GenBank/DDBJ databases">
        <title>Complete sequence of Methanococcus vannielii SB.</title>
        <authorList>
            <consortium name="US DOE Joint Genome Institute"/>
            <person name="Copeland A."/>
            <person name="Lucas S."/>
            <person name="Lapidus A."/>
            <person name="Barry K."/>
            <person name="Glavina del Rio T."/>
            <person name="Dalin E."/>
            <person name="Tice H."/>
            <person name="Pitluck S."/>
            <person name="Chain P."/>
            <person name="Malfatti S."/>
            <person name="Shin M."/>
            <person name="Vergez L."/>
            <person name="Schmutz J."/>
            <person name="Larimer F."/>
            <person name="Land M."/>
            <person name="Hauser L."/>
            <person name="Kyrpides N."/>
            <person name="Anderson I."/>
            <person name="Sieprawska-Lupa M."/>
            <person name="Whitman W.B."/>
            <person name="Richardson P."/>
        </authorList>
    </citation>
    <scope>NUCLEOTIDE SEQUENCE [LARGE SCALE GENOMIC DNA]</scope>
    <source>
        <strain>ATCC 35089 / DSM 1224 / JCM 13029 / OCM 148 / SB</strain>
    </source>
</reference>
<name>SRP54_METVS</name>
<sequence length="450" mass="49982">MLDKLGQNLSEALNKIKNATFVDKKLVKEVIKDIQKALIQSDVNVKLVFNMSKEIERKAIEEAPPKGFSKKEHIIKIVYDELVKLLGENPQKLELDPSKKSVILLVGIQGSGKTTSSAKLARYIQKKGMKPALIAADIYRPAAYQQLKQLSEKINVPLFGDETKTKTPVEIVKEGIEKLKKSDVLIIDTAGRHKEEESLLEEMKQMKEITNPNEIILVIDGTLGQQAKNQAKAFKDAVSEIGSILVTKLDGSAKGGGALSAVAEINAPIKFIGTGEGVDNLETFDPKKFISRLLGMGDLDSLLEKTEDVMDESTEESIDSILKGKFTLVELYAQLETISKMGPMKQIMGMIPGFGGNMPKEAAQLTEQKLKRYKIMMDSMTMEEKENPELIKTSRLQRIAKGAGVKQDEIKDLLKYYATTKNAFGNLKRGKMPKMGGKMGQIMRQLMYKE</sequence>
<organism>
    <name type="scientific">Methanococcus vannielii (strain ATCC 35089 / DSM 1224 / JCM 13029 / OCM 148 / SB)</name>
    <dbReference type="NCBI Taxonomy" id="406327"/>
    <lineage>
        <taxon>Archaea</taxon>
        <taxon>Methanobacteriati</taxon>
        <taxon>Methanobacteriota</taxon>
        <taxon>Methanomada group</taxon>
        <taxon>Methanococci</taxon>
        <taxon>Methanococcales</taxon>
        <taxon>Methanococcaceae</taxon>
        <taxon>Methanococcus</taxon>
    </lineage>
</organism>
<comment type="function">
    <text evidence="1">Involved in targeting and insertion of nascent membrane proteins into the cytoplasmic membrane. Binds to the hydrophobic signal sequence of the ribosome-nascent chain (RNC) as it emerges from the ribosomes. The SRP-RNC complex is then targeted to the cytoplasmic membrane where it interacts with the SRP receptor FtsY.</text>
</comment>
<comment type="catalytic activity">
    <reaction evidence="1">
        <text>GTP + H2O = GDP + phosphate + H(+)</text>
        <dbReference type="Rhea" id="RHEA:19669"/>
        <dbReference type="ChEBI" id="CHEBI:15377"/>
        <dbReference type="ChEBI" id="CHEBI:15378"/>
        <dbReference type="ChEBI" id="CHEBI:37565"/>
        <dbReference type="ChEBI" id="CHEBI:43474"/>
        <dbReference type="ChEBI" id="CHEBI:58189"/>
        <dbReference type="EC" id="3.6.5.4"/>
    </reaction>
</comment>
<comment type="subunit">
    <text evidence="1">Part of the signal recognition particle protein translocation system, which is composed of SRP and FtsY. Archaeal SRP consists of a 7S RNA molecule of 300 nucleotides and two protein subunits: SRP54 and SRP19.</text>
</comment>
<comment type="subcellular location">
    <subcellularLocation>
        <location evidence="1">Cytoplasm</location>
    </subcellularLocation>
    <text evidence="1">The SRP-RNC complex is targeted to the cytoplasmic membrane.</text>
</comment>
<comment type="domain">
    <text evidence="1">Composed of three domains: the N-terminal N domain, which is responsible for interactions with the ribosome, the central G domain, which binds GTP, and the C-terminal M domain, which binds the RNA and the signal sequence of the RNC.</text>
</comment>
<comment type="similarity">
    <text evidence="1">Belongs to the GTP-binding SRP family. SRP54 subfamily.</text>
</comment>
<proteinExistence type="inferred from homology"/>
<accession>A6UQJ8</accession>
<evidence type="ECO:0000255" key="1">
    <source>
        <dbReference type="HAMAP-Rule" id="MF_00306"/>
    </source>
</evidence>
<keyword id="KW-0963">Cytoplasm</keyword>
<keyword id="KW-0342">GTP-binding</keyword>
<keyword id="KW-0378">Hydrolase</keyword>
<keyword id="KW-0547">Nucleotide-binding</keyword>
<keyword id="KW-0687">Ribonucleoprotein</keyword>
<keyword id="KW-0694">RNA-binding</keyword>
<keyword id="KW-0733">Signal recognition particle</keyword>
<protein>
    <recommendedName>
        <fullName evidence="1">Signal recognition particle 54 kDa protein</fullName>
        <shortName evidence="1">SRP54</shortName>
        <ecNumber evidence="1">3.6.5.4</ecNumber>
    </recommendedName>
</protein>
<feature type="chain" id="PRO_1000022790" description="Signal recognition particle 54 kDa protein">
    <location>
        <begin position="1"/>
        <end position="450"/>
    </location>
</feature>
<feature type="binding site" evidence="1">
    <location>
        <begin position="107"/>
        <end position="114"/>
    </location>
    <ligand>
        <name>GTP</name>
        <dbReference type="ChEBI" id="CHEBI:37565"/>
    </ligand>
</feature>
<feature type="binding site" evidence="1">
    <location>
        <begin position="188"/>
        <end position="192"/>
    </location>
    <ligand>
        <name>GTP</name>
        <dbReference type="ChEBI" id="CHEBI:37565"/>
    </ligand>
</feature>
<feature type="binding site" evidence="1">
    <location>
        <begin position="247"/>
        <end position="250"/>
    </location>
    <ligand>
        <name>GTP</name>
        <dbReference type="ChEBI" id="CHEBI:37565"/>
    </ligand>
</feature>